<name>LEPA_EHRCR</name>
<sequence>MDESHIRNFAIIAHIDHGKSTLADRLIEECNGLDEREMKDQVLDSMDIERERGITIKAQTVRLAYKAKDGQTYYLNLMDTPGHVDFSYEVSRSLAACEGSLLIVDSSQGVEAQTLANVYKAIDSNHEIIPVLNKIDLASSDPDKVKLQIEDMIGIDASESLLVSAKSGIGIQDVLEAIVSRLPAPSGKSENPLKAILVDTWYDTYLGIVILLRIKDGVIRKGMKIVMMSNNAVYQVDNVGIFTPHKKVVDQLSVGEIGFITASIKELSDCKVGDTITEEQRRCSEPLPGFRTIHPVVFCSIFPNEAGEFERLREALKKLQLNDASFTFEIEVSNALGYGFRCGFLGMLHLEVIQERLEREFNLDLTATAPGVIYQVTTRSGDVRKVHNPHDFGESQDIANIKEPWICATIMVPDQYLGVIMSLCNNKRGEKLDLSYSGNTALLKYRLPLSEVVFDFYDRIKSMSKGYASLDWEMDEYLDSEIAKLSILINSEPVDALACIIHKSKVEQRGREICLRLKDLIPRQQYKIAIQAAVGGRIVARETISPYRKDVTAKLYGGDVTRRMKLLEKQKKGKKRLRSIGNVNVPHNAFIQALKIID</sequence>
<reference key="1">
    <citation type="journal article" date="2006" name="PLoS Genet.">
        <title>Comparative genomics of emerging human ehrlichiosis agents.</title>
        <authorList>
            <person name="Dunning Hotopp J.C."/>
            <person name="Lin M."/>
            <person name="Madupu R."/>
            <person name="Crabtree J."/>
            <person name="Angiuoli S.V."/>
            <person name="Eisen J.A."/>
            <person name="Seshadri R."/>
            <person name="Ren Q."/>
            <person name="Wu M."/>
            <person name="Utterback T.R."/>
            <person name="Smith S."/>
            <person name="Lewis M."/>
            <person name="Khouri H."/>
            <person name="Zhang C."/>
            <person name="Niu H."/>
            <person name="Lin Q."/>
            <person name="Ohashi N."/>
            <person name="Zhi N."/>
            <person name="Nelson W.C."/>
            <person name="Brinkac L.M."/>
            <person name="Dodson R.J."/>
            <person name="Rosovitz M.J."/>
            <person name="Sundaram J.P."/>
            <person name="Daugherty S.C."/>
            <person name="Davidsen T."/>
            <person name="Durkin A.S."/>
            <person name="Gwinn M.L."/>
            <person name="Haft D.H."/>
            <person name="Selengut J.D."/>
            <person name="Sullivan S.A."/>
            <person name="Zafar N."/>
            <person name="Zhou L."/>
            <person name="Benahmed F."/>
            <person name="Forberger H."/>
            <person name="Halpin R."/>
            <person name="Mulligan S."/>
            <person name="Robinson J."/>
            <person name="White O."/>
            <person name="Rikihisa Y."/>
            <person name="Tettelin H."/>
        </authorList>
    </citation>
    <scope>NUCLEOTIDE SEQUENCE [LARGE SCALE GENOMIC DNA]</scope>
    <source>
        <strain>ATCC CRL-10679 / Arkansas</strain>
    </source>
</reference>
<dbReference type="EC" id="3.6.5.n1" evidence="1"/>
<dbReference type="EMBL" id="CP000236">
    <property type="protein sequence ID" value="ABD44948.1"/>
    <property type="molecule type" value="Genomic_DNA"/>
</dbReference>
<dbReference type="RefSeq" id="WP_006010419.1">
    <property type="nucleotide sequence ID" value="NC_007799.1"/>
</dbReference>
<dbReference type="SMR" id="Q2GGA6"/>
<dbReference type="STRING" id="205920.ECH_0724"/>
<dbReference type="KEGG" id="ech:ECH_0724"/>
<dbReference type="eggNOG" id="COG0481">
    <property type="taxonomic scope" value="Bacteria"/>
</dbReference>
<dbReference type="HOGENOM" id="CLU_009995_3_3_5"/>
<dbReference type="OrthoDB" id="9802948at2"/>
<dbReference type="Proteomes" id="UP000008320">
    <property type="component" value="Chromosome"/>
</dbReference>
<dbReference type="GO" id="GO:0005886">
    <property type="term" value="C:plasma membrane"/>
    <property type="evidence" value="ECO:0007669"/>
    <property type="project" value="UniProtKB-SubCell"/>
</dbReference>
<dbReference type="GO" id="GO:0005525">
    <property type="term" value="F:GTP binding"/>
    <property type="evidence" value="ECO:0007669"/>
    <property type="project" value="UniProtKB-UniRule"/>
</dbReference>
<dbReference type="GO" id="GO:0003924">
    <property type="term" value="F:GTPase activity"/>
    <property type="evidence" value="ECO:0007669"/>
    <property type="project" value="UniProtKB-UniRule"/>
</dbReference>
<dbReference type="GO" id="GO:0097216">
    <property type="term" value="F:guanosine tetraphosphate binding"/>
    <property type="evidence" value="ECO:0007669"/>
    <property type="project" value="UniProtKB-ARBA"/>
</dbReference>
<dbReference type="GO" id="GO:0043022">
    <property type="term" value="F:ribosome binding"/>
    <property type="evidence" value="ECO:0007669"/>
    <property type="project" value="UniProtKB-UniRule"/>
</dbReference>
<dbReference type="GO" id="GO:0003746">
    <property type="term" value="F:translation elongation factor activity"/>
    <property type="evidence" value="ECO:0007669"/>
    <property type="project" value="UniProtKB-UniRule"/>
</dbReference>
<dbReference type="GO" id="GO:0045727">
    <property type="term" value="P:positive regulation of translation"/>
    <property type="evidence" value="ECO:0007669"/>
    <property type="project" value="UniProtKB-UniRule"/>
</dbReference>
<dbReference type="CDD" id="cd03699">
    <property type="entry name" value="EF4_II"/>
    <property type="match status" value="1"/>
</dbReference>
<dbReference type="CDD" id="cd16260">
    <property type="entry name" value="EF4_III"/>
    <property type="match status" value="1"/>
</dbReference>
<dbReference type="CDD" id="cd01890">
    <property type="entry name" value="LepA"/>
    <property type="match status" value="1"/>
</dbReference>
<dbReference type="CDD" id="cd03709">
    <property type="entry name" value="lepA_C"/>
    <property type="match status" value="1"/>
</dbReference>
<dbReference type="FunFam" id="3.40.50.300:FF:000078">
    <property type="entry name" value="Elongation factor 4"/>
    <property type="match status" value="1"/>
</dbReference>
<dbReference type="FunFam" id="2.40.30.10:FF:000015">
    <property type="entry name" value="Translation factor GUF1, mitochondrial"/>
    <property type="match status" value="1"/>
</dbReference>
<dbReference type="FunFam" id="3.30.70.240:FF:000007">
    <property type="entry name" value="Translation factor GUF1, mitochondrial"/>
    <property type="match status" value="1"/>
</dbReference>
<dbReference type="FunFam" id="3.30.70.2570:FF:000001">
    <property type="entry name" value="Translation factor GUF1, mitochondrial"/>
    <property type="match status" value="1"/>
</dbReference>
<dbReference type="FunFam" id="3.30.70.870:FF:000004">
    <property type="entry name" value="Translation factor GUF1, mitochondrial"/>
    <property type="match status" value="1"/>
</dbReference>
<dbReference type="Gene3D" id="3.30.70.240">
    <property type="match status" value="1"/>
</dbReference>
<dbReference type="Gene3D" id="3.30.70.2570">
    <property type="entry name" value="Elongation factor 4, C-terminal domain"/>
    <property type="match status" value="1"/>
</dbReference>
<dbReference type="Gene3D" id="3.30.70.870">
    <property type="entry name" value="Elongation Factor G (Translational Gtpase), domain 3"/>
    <property type="match status" value="1"/>
</dbReference>
<dbReference type="Gene3D" id="3.40.50.300">
    <property type="entry name" value="P-loop containing nucleotide triphosphate hydrolases"/>
    <property type="match status" value="1"/>
</dbReference>
<dbReference type="Gene3D" id="2.40.30.10">
    <property type="entry name" value="Translation factors"/>
    <property type="match status" value="1"/>
</dbReference>
<dbReference type="HAMAP" id="MF_00071">
    <property type="entry name" value="LepA"/>
    <property type="match status" value="1"/>
</dbReference>
<dbReference type="InterPro" id="IPR006297">
    <property type="entry name" value="EF-4"/>
</dbReference>
<dbReference type="InterPro" id="IPR041095">
    <property type="entry name" value="EFG_II"/>
</dbReference>
<dbReference type="InterPro" id="IPR035647">
    <property type="entry name" value="EFG_III/V"/>
</dbReference>
<dbReference type="InterPro" id="IPR000640">
    <property type="entry name" value="EFG_V-like"/>
</dbReference>
<dbReference type="InterPro" id="IPR004161">
    <property type="entry name" value="EFTu-like_2"/>
</dbReference>
<dbReference type="InterPro" id="IPR031157">
    <property type="entry name" value="G_TR_CS"/>
</dbReference>
<dbReference type="InterPro" id="IPR038363">
    <property type="entry name" value="LepA_C_sf"/>
</dbReference>
<dbReference type="InterPro" id="IPR013842">
    <property type="entry name" value="LepA_CTD"/>
</dbReference>
<dbReference type="InterPro" id="IPR035654">
    <property type="entry name" value="LepA_IV"/>
</dbReference>
<dbReference type="InterPro" id="IPR027417">
    <property type="entry name" value="P-loop_NTPase"/>
</dbReference>
<dbReference type="InterPro" id="IPR005225">
    <property type="entry name" value="Small_GTP-bd"/>
</dbReference>
<dbReference type="InterPro" id="IPR000795">
    <property type="entry name" value="T_Tr_GTP-bd_dom"/>
</dbReference>
<dbReference type="NCBIfam" id="TIGR01393">
    <property type="entry name" value="lepA"/>
    <property type="match status" value="1"/>
</dbReference>
<dbReference type="NCBIfam" id="TIGR00231">
    <property type="entry name" value="small_GTP"/>
    <property type="match status" value="1"/>
</dbReference>
<dbReference type="PANTHER" id="PTHR43512:SF4">
    <property type="entry name" value="TRANSLATION FACTOR GUF1 HOMOLOG, CHLOROPLASTIC"/>
    <property type="match status" value="1"/>
</dbReference>
<dbReference type="PANTHER" id="PTHR43512">
    <property type="entry name" value="TRANSLATION FACTOR GUF1-RELATED"/>
    <property type="match status" value="1"/>
</dbReference>
<dbReference type="Pfam" id="PF00679">
    <property type="entry name" value="EFG_C"/>
    <property type="match status" value="1"/>
</dbReference>
<dbReference type="Pfam" id="PF14492">
    <property type="entry name" value="EFG_III"/>
    <property type="match status" value="1"/>
</dbReference>
<dbReference type="Pfam" id="PF00009">
    <property type="entry name" value="GTP_EFTU"/>
    <property type="match status" value="1"/>
</dbReference>
<dbReference type="Pfam" id="PF03144">
    <property type="entry name" value="GTP_EFTU_D2"/>
    <property type="match status" value="1"/>
</dbReference>
<dbReference type="Pfam" id="PF06421">
    <property type="entry name" value="LepA_C"/>
    <property type="match status" value="1"/>
</dbReference>
<dbReference type="PRINTS" id="PR00315">
    <property type="entry name" value="ELONGATNFCT"/>
</dbReference>
<dbReference type="SMART" id="SM00838">
    <property type="entry name" value="EFG_C"/>
    <property type="match status" value="1"/>
</dbReference>
<dbReference type="SUPFAM" id="SSF54980">
    <property type="entry name" value="EF-G C-terminal domain-like"/>
    <property type="match status" value="2"/>
</dbReference>
<dbReference type="SUPFAM" id="SSF52540">
    <property type="entry name" value="P-loop containing nucleoside triphosphate hydrolases"/>
    <property type="match status" value="1"/>
</dbReference>
<dbReference type="PROSITE" id="PS00301">
    <property type="entry name" value="G_TR_1"/>
    <property type="match status" value="1"/>
</dbReference>
<dbReference type="PROSITE" id="PS51722">
    <property type="entry name" value="G_TR_2"/>
    <property type="match status" value="1"/>
</dbReference>
<organism>
    <name type="scientific">Ehrlichia chaffeensis (strain ATCC CRL-10679 / Arkansas)</name>
    <dbReference type="NCBI Taxonomy" id="205920"/>
    <lineage>
        <taxon>Bacteria</taxon>
        <taxon>Pseudomonadati</taxon>
        <taxon>Pseudomonadota</taxon>
        <taxon>Alphaproteobacteria</taxon>
        <taxon>Rickettsiales</taxon>
        <taxon>Anaplasmataceae</taxon>
        <taxon>Ehrlichia</taxon>
    </lineage>
</organism>
<accession>Q2GGA6</accession>
<keyword id="KW-0997">Cell inner membrane</keyword>
<keyword id="KW-1003">Cell membrane</keyword>
<keyword id="KW-0342">GTP-binding</keyword>
<keyword id="KW-0378">Hydrolase</keyword>
<keyword id="KW-0472">Membrane</keyword>
<keyword id="KW-0547">Nucleotide-binding</keyword>
<keyword id="KW-0648">Protein biosynthesis</keyword>
<keyword id="KW-1185">Reference proteome</keyword>
<feature type="chain" id="PRO_0000265654" description="Elongation factor 4">
    <location>
        <begin position="1"/>
        <end position="598"/>
    </location>
</feature>
<feature type="domain" description="tr-type G">
    <location>
        <begin position="4"/>
        <end position="186"/>
    </location>
</feature>
<feature type="binding site" evidence="1">
    <location>
        <begin position="16"/>
        <end position="21"/>
    </location>
    <ligand>
        <name>GTP</name>
        <dbReference type="ChEBI" id="CHEBI:37565"/>
    </ligand>
</feature>
<feature type="binding site" evidence="1">
    <location>
        <begin position="133"/>
        <end position="136"/>
    </location>
    <ligand>
        <name>GTP</name>
        <dbReference type="ChEBI" id="CHEBI:37565"/>
    </ligand>
</feature>
<evidence type="ECO:0000255" key="1">
    <source>
        <dbReference type="HAMAP-Rule" id="MF_00071"/>
    </source>
</evidence>
<gene>
    <name evidence="1" type="primary">lepA</name>
    <name type="ordered locus">ECH_0724</name>
</gene>
<proteinExistence type="inferred from homology"/>
<protein>
    <recommendedName>
        <fullName evidence="1">Elongation factor 4</fullName>
        <shortName evidence="1">EF-4</shortName>
        <ecNumber evidence="1">3.6.5.n1</ecNumber>
    </recommendedName>
    <alternativeName>
        <fullName evidence="1">Ribosomal back-translocase LepA</fullName>
    </alternativeName>
</protein>
<comment type="function">
    <text evidence="1">Required for accurate and efficient protein synthesis under certain stress conditions. May act as a fidelity factor of the translation reaction, by catalyzing a one-codon backward translocation of tRNAs on improperly translocated ribosomes. Back-translocation proceeds from a post-translocation (POST) complex to a pre-translocation (PRE) complex, thus giving elongation factor G a second chance to translocate the tRNAs correctly. Binds to ribosomes in a GTP-dependent manner.</text>
</comment>
<comment type="catalytic activity">
    <reaction evidence="1">
        <text>GTP + H2O = GDP + phosphate + H(+)</text>
        <dbReference type="Rhea" id="RHEA:19669"/>
        <dbReference type="ChEBI" id="CHEBI:15377"/>
        <dbReference type="ChEBI" id="CHEBI:15378"/>
        <dbReference type="ChEBI" id="CHEBI:37565"/>
        <dbReference type="ChEBI" id="CHEBI:43474"/>
        <dbReference type="ChEBI" id="CHEBI:58189"/>
        <dbReference type="EC" id="3.6.5.n1"/>
    </reaction>
</comment>
<comment type="subcellular location">
    <subcellularLocation>
        <location evidence="1">Cell inner membrane</location>
        <topology evidence="1">Peripheral membrane protein</topology>
        <orientation evidence="1">Cytoplasmic side</orientation>
    </subcellularLocation>
</comment>
<comment type="similarity">
    <text evidence="1">Belongs to the TRAFAC class translation factor GTPase superfamily. Classic translation factor GTPase family. LepA subfamily.</text>
</comment>